<organism>
    <name type="scientific">Escherichia coli O157:H7</name>
    <dbReference type="NCBI Taxonomy" id="83334"/>
    <lineage>
        <taxon>Bacteria</taxon>
        <taxon>Pseudomonadati</taxon>
        <taxon>Pseudomonadota</taxon>
        <taxon>Gammaproteobacteria</taxon>
        <taxon>Enterobacterales</taxon>
        <taxon>Enterobacteriaceae</taxon>
        <taxon>Escherichia</taxon>
    </lineage>
</organism>
<accession>P0AE25</accession>
<accession>P09830</accession>
<accession>Q46937</accession>
<name>ARAE_ECO57</name>
<reference key="1">
    <citation type="journal article" date="2001" name="Nature">
        <title>Genome sequence of enterohaemorrhagic Escherichia coli O157:H7.</title>
        <authorList>
            <person name="Perna N.T."/>
            <person name="Plunkett G. III"/>
            <person name="Burland V."/>
            <person name="Mau B."/>
            <person name="Glasner J.D."/>
            <person name="Rose D.J."/>
            <person name="Mayhew G.F."/>
            <person name="Evans P.S."/>
            <person name="Gregor J."/>
            <person name="Kirkpatrick H.A."/>
            <person name="Posfai G."/>
            <person name="Hackett J."/>
            <person name="Klink S."/>
            <person name="Boutin A."/>
            <person name="Shao Y."/>
            <person name="Miller L."/>
            <person name="Grotbeck E.J."/>
            <person name="Davis N.W."/>
            <person name="Lim A."/>
            <person name="Dimalanta E.T."/>
            <person name="Potamousis K."/>
            <person name="Apodaca J."/>
            <person name="Anantharaman T.S."/>
            <person name="Lin J."/>
            <person name="Yen G."/>
            <person name="Schwartz D.C."/>
            <person name="Welch R.A."/>
            <person name="Blattner F.R."/>
        </authorList>
    </citation>
    <scope>NUCLEOTIDE SEQUENCE [LARGE SCALE GENOMIC DNA]</scope>
    <source>
        <strain>O157:H7 / EDL933 / ATCC 700927 / EHEC</strain>
    </source>
</reference>
<reference key="2">
    <citation type="journal article" date="2001" name="DNA Res.">
        <title>Complete genome sequence of enterohemorrhagic Escherichia coli O157:H7 and genomic comparison with a laboratory strain K-12.</title>
        <authorList>
            <person name="Hayashi T."/>
            <person name="Makino K."/>
            <person name="Ohnishi M."/>
            <person name="Kurokawa K."/>
            <person name="Ishii K."/>
            <person name="Yokoyama K."/>
            <person name="Han C.-G."/>
            <person name="Ohtsubo E."/>
            <person name="Nakayama K."/>
            <person name="Murata T."/>
            <person name="Tanaka M."/>
            <person name="Tobe T."/>
            <person name="Iida T."/>
            <person name="Takami H."/>
            <person name="Honda T."/>
            <person name="Sasakawa C."/>
            <person name="Ogasawara N."/>
            <person name="Yasunaga T."/>
            <person name="Kuhara S."/>
            <person name="Shiba T."/>
            <person name="Hattori M."/>
            <person name="Shinagawa H."/>
        </authorList>
    </citation>
    <scope>NUCLEOTIDE SEQUENCE [LARGE SCALE GENOMIC DNA]</scope>
    <source>
        <strain>O157:H7 / Sakai / RIMD 0509952 / EHEC</strain>
    </source>
</reference>
<gene>
    <name type="primary">araE</name>
    <name type="ordered locus">Z4161</name>
    <name type="ordered locus">ECs3698</name>
</gene>
<feature type="chain" id="PRO_0000050290" description="Arabinose-proton symporter">
    <location>
        <begin position="1"/>
        <end position="472"/>
    </location>
</feature>
<feature type="topological domain" description="Cytoplasmic" evidence="3">
    <location>
        <begin position="1"/>
        <end position="29"/>
    </location>
</feature>
<feature type="transmembrane region" description="Helical" evidence="2">
    <location>
        <begin position="30"/>
        <end position="50"/>
    </location>
</feature>
<feature type="topological domain" description="Periplasmic" evidence="3">
    <location>
        <begin position="51"/>
        <end position="63"/>
    </location>
</feature>
<feature type="transmembrane region" description="Helical" evidence="2">
    <location>
        <begin position="64"/>
        <end position="84"/>
    </location>
</feature>
<feature type="topological domain" description="Cytoplasmic" evidence="3">
    <location>
        <begin position="85"/>
        <end position="91"/>
    </location>
</feature>
<feature type="transmembrane region" description="Helical" evidence="2">
    <location>
        <begin position="92"/>
        <end position="112"/>
    </location>
</feature>
<feature type="topological domain" description="Periplasmic" evidence="3">
    <location>
        <begin position="113"/>
        <end position="114"/>
    </location>
</feature>
<feature type="transmembrane region" description="Helical" evidence="2">
    <location>
        <begin position="115"/>
        <end position="135"/>
    </location>
</feature>
<feature type="topological domain" description="Cytoplasmic" evidence="3">
    <location>
        <begin position="136"/>
        <end position="154"/>
    </location>
</feature>
<feature type="transmembrane region" description="Helical" evidence="2">
    <location>
        <begin position="155"/>
        <end position="175"/>
    </location>
</feature>
<feature type="topological domain" description="Periplasmic" evidence="3">
    <location>
        <begin position="176"/>
        <end position="178"/>
    </location>
</feature>
<feature type="transmembrane region" description="Helical" evidence="2">
    <location>
        <begin position="179"/>
        <end position="199"/>
    </location>
</feature>
<feature type="topological domain" description="Cytoplasmic" evidence="3">
    <location>
        <begin position="200"/>
        <end position="257"/>
    </location>
</feature>
<feature type="transmembrane region" description="Helical" evidence="2">
    <location>
        <begin position="258"/>
        <end position="278"/>
    </location>
</feature>
<feature type="topological domain" description="Periplasmic" evidence="3">
    <location>
        <begin position="279"/>
        <end position="297"/>
    </location>
</feature>
<feature type="transmembrane region" description="Helical" evidence="2">
    <location>
        <begin position="298"/>
        <end position="318"/>
    </location>
</feature>
<feature type="topological domain" description="Cytoplasmic" evidence="3">
    <location>
        <begin position="319"/>
        <end position="325"/>
    </location>
</feature>
<feature type="transmembrane region" description="Helical" evidence="2">
    <location>
        <begin position="326"/>
        <end position="346"/>
    </location>
</feature>
<feature type="topological domain" description="Periplasmic" evidence="3">
    <location>
        <begin position="347"/>
        <end position="361"/>
    </location>
</feature>
<feature type="transmembrane region" description="Helical" evidence="2">
    <location>
        <begin position="362"/>
        <end position="382"/>
    </location>
</feature>
<feature type="topological domain" description="Cytoplasmic" evidence="3">
    <location>
        <begin position="383"/>
        <end position="404"/>
    </location>
</feature>
<feature type="transmembrane region" description="Helical" evidence="2">
    <location>
        <begin position="405"/>
        <end position="425"/>
    </location>
</feature>
<feature type="transmembrane region" description="Helical" evidence="2">
    <location>
        <begin position="426"/>
        <end position="446"/>
    </location>
</feature>
<feature type="topological domain" description="Cytoplasmic" evidence="1">
    <location>
        <begin position="447"/>
        <end position="472"/>
    </location>
</feature>
<proteinExistence type="inferred from homology"/>
<protein>
    <recommendedName>
        <fullName evidence="1">Arabinose-proton symporter</fullName>
    </recommendedName>
    <alternativeName>
        <fullName evidence="1">Arabinose transporter</fullName>
    </alternativeName>
</protein>
<sequence length="472" mass="51684">MVTINTESALTPRSLRDTRRMNMFVSVAAAVAGLLFGLDIGVIAGALPFITDHFVLTSRLQEWVVSSMMLGAAIGALFNGWLSFRLGRKYSLMAGAILFVLGSIGSAFATSVEMLIAARVVLGIAVGIASYTAPLYLSEMASENVRGKMISMYQLMVTLGIVLAFLSDTAFSYSGNWRAMLGVLALPAVLLIILVVFLPNSPRWLAEKGRHIEAEEVLRMLRDTSEKAREELNEIRESLKLKQGGWALFKINRNVRRAVFLGMLLQAMQQFTGMNIIMYYAPRIFKMAGFTTTEQQMIATLVVGLTFMFATFIAVFTVDKAGRKPALKIGFSVMALGTLVLGYCLMQFDNGTASSGLSWLSVGMTMMCIAGYAMSAAPVVWILCSEIQPLKCRDFGITCSTTTNWVSNMIIGATFLTLLDSIGAAGTFWLYTALNIAFVGITFWLIPETKNVTLEHIERKLMAGEKLRNIGV</sequence>
<dbReference type="EMBL" id="AE005174">
    <property type="protein sequence ID" value="AAG57953.1"/>
    <property type="molecule type" value="Genomic_DNA"/>
</dbReference>
<dbReference type="EMBL" id="BA000007">
    <property type="protein sequence ID" value="BAB37121.1"/>
    <property type="molecule type" value="Genomic_DNA"/>
</dbReference>
<dbReference type="PIR" id="B91091">
    <property type="entry name" value="B91091"/>
</dbReference>
<dbReference type="PIR" id="E85936">
    <property type="entry name" value="E85936"/>
</dbReference>
<dbReference type="RefSeq" id="WP_000256438.1">
    <property type="nucleotide sequence ID" value="NZ_VOAI01000003.1"/>
</dbReference>
<dbReference type="SMR" id="P0AE25"/>
<dbReference type="STRING" id="155864.Z4161"/>
<dbReference type="GeneID" id="93779155"/>
<dbReference type="KEGG" id="ece:Z4161"/>
<dbReference type="KEGG" id="ecs:ECs_3698"/>
<dbReference type="PATRIC" id="fig|386585.9.peg.3865"/>
<dbReference type="eggNOG" id="COG2814">
    <property type="taxonomic scope" value="Bacteria"/>
</dbReference>
<dbReference type="HOGENOM" id="CLU_001265_30_5_6"/>
<dbReference type="OMA" id="ETGWRWM"/>
<dbReference type="Proteomes" id="UP000000558">
    <property type="component" value="Chromosome"/>
</dbReference>
<dbReference type="Proteomes" id="UP000002519">
    <property type="component" value="Chromosome"/>
</dbReference>
<dbReference type="GO" id="GO:0005886">
    <property type="term" value="C:plasma membrane"/>
    <property type="evidence" value="ECO:0007669"/>
    <property type="project" value="UniProtKB-SubCell"/>
</dbReference>
<dbReference type="GO" id="GO:0015293">
    <property type="term" value="F:symporter activity"/>
    <property type="evidence" value="ECO:0007669"/>
    <property type="project" value="UniProtKB-KW"/>
</dbReference>
<dbReference type="CDD" id="cd17315">
    <property type="entry name" value="MFS_GLUT_like"/>
    <property type="match status" value="1"/>
</dbReference>
<dbReference type="FunFam" id="1.20.1250.20:FF:000008">
    <property type="entry name" value="Galactose-proton symporter (Galactose transporter)"/>
    <property type="match status" value="1"/>
</dbReference>
<dbReference type="Gene3D" id="1.20.1250.20">
    <property type="entry name" value="MFS general substrate transporter like domains"/>
    <property type="match status" value="1"/>
</dbReference>
<dbReference type="InterPro" id="IPR020846">
    <property type="entry name" value="MFS_dom"/>
</dbReference>
<dbReference type="InterPro" id="IPR005828">
    <property type="entry name" value="MFS_sugar_transport-like"/>
</dbReference>
<dbReference type="InterPro" id="IPR036259">
    <property type="entry name" value="MFS_trans_sf"/>
</dbReference>
<dbReference type="InterPro" id="IPR050814">
    <property type="entry name" value="Myo-inositol_Transporter"/>
</dbReference>
<dbReference type="InterPro" id="IPR003663">
    <property type="entry name" value="Sugar/inositol_transpt"/>
</dbReference>
<dbReference type="InterPro" id="IPR005829">
    <property type="entry name" value="Sugar_transporter_CS"/>
</dbReference>
<dbReference type="NCBIfam" id="TIGR00879">
    <property type="entry name" value="SP"/>
    <property type="match status" value="1"/>
</dbReference>
<dbReference type="PANTHER" id="PTHR48020">
    <property type="entry name" value="PROTON MYO-INOSITOL COTRANSPORTER"/>
    <property type="match status" value="1"/>
</dbReference>
<dbReference type="PANTHER" id="PTHR48020:SF12">
    <property type="entry name" value="PROTON MYO-INOSITOL COTRANSPORTER"/>
    <property type="match status" value="1"/>
</dbReference>
<dbReference type="Pfam" id="PF00083">
    <property type="entry name" value="Sugar_tr"/>
    <property type="match status" value="1"/>
</dbReference>
<dbReference type="PRINTS" id="PR00171">
    <property type="entry name" value="SUGRTRNSPORT"/>
</dbReference>
<dbReference type="SUPFAM" id="SSF103473">
    <property type="entry name" value="MFS general substrate transporter"/>
    <property type="match status" value="1"/>
</dbReference>
<dbReference type="PROSITE" id="PS50850">
    <property type="entry name" value="MFS"/>
    <property type="match status" value="1"/>
</dbReference>
<dbReference type="PROSITE" id="PS00216">
    <property type="entry name" value="SUGAR_TRANSPORT_1"/>
    <property type="match status" value="1"/>
</dbReference>
<dbReference type="PROSITE" id="PS00217">
    <property type="entry name" value="SUGAR_TRANSPORT_2"/>
    <property type="match status" value="1"/>
</dbReference>
<comment type="function">
    <text evidence="1">Uptake of L-arabinose across the cytoplasmic membrane with the concomitant transport of protons into the cell (symport system).</text>
</comment>
<comment type="catalytic activity">
    <reaction evidence="1">
        <text>L-arabinose(in) + H(+)(in) = L-arabinose(out) + H(+)(out)</text>
        <dbReference type="Rhea" id="RHEA:28951"/>
        <dbReference type="ChEBI" id="CHEBI:15378"/>
        <dbReference type="ChEBI" id="CHEBI:17535"/>
    </reaction>
    <physiologicalReaction direction="right-to-left" evidence="1">
        <dbReference type="Rhea" id="RHEA:28953"/>
    </physiologicalReaction>
</comment>
<comment type="subcellular location">
    <subcellularLocation>
        <location evidence="1">Cell inner membrane</location>
        <topology evidence="2">Multi-pass membrane protein</topology>
    </subcellularLocation>
</comment>
<comment type="similarity">
    <text evidence="3">Belongs to the major facilitator superfamily. Sugar transporter (TC 2.A.1.1) family.</text>
</comment>
<keyword id="KW-0997">Cell inner membrane</keyword>
<keyword id="KW-1003">Cell membrane</keyword>
<keyword id="KW-0472">Membrane</keyword>
<keyword id="KW-1185">Reference proteome</keyword>
<keyword id="KW-0762">Sugar transport</keyword>
<keyword id="KW-0769">Symport</keyword>
<keyword id="KW-0812">Transmembrane</keyword>
<keyword id="KW-1133">Transmembrane helix</keyword>
<keyword id="KW-0813">Transport</keyword>
<evidence type="ECO:0000250" key="1">
    <source>
        <dbReference type="UniProtKB" id="P0AE24"/>
    </source>
</evidence>
<evidence type="ECO:0000255" key="2"/>
<evidence type="ECO:0000305" key="3"/>